<gene>
    <name evidence="1" type="primary">ligA</name>
    <name type="ordered locus">ESA_00834</name>
</gene>
<sequence length="672" mass="73776">MESIEEKLTQLRTTLRHHEFLYHVMDAPEVPDAEYDRLMRELRALEEAHPELVTPDSPTQRVGAAPLTEFSQVRHEVPMLSLDNVFDEASFLAFNKRVQDRLKSTDALVYCCELKLDGLAVSLLYENGLLVRAATRGDGTTGEDITLNVRTIRAIPLKLRGDNIPARLEVRGEVFLPQAGFEKINEEARRTGGKVFANPRNAAAGSLRQLDPRVTAKRPLTFFCYGVGLLEGGELPRSHMERLQQFKAWGLPVSDRIRLVKTPEEVLAFYHQVEADRPTLGFDIDGVVIKVDSLELQEQLGFVARAPRWAVAFKFPAQEQMTTVRDVEFQVGRTGAITPVARLEPVQVAGVLVSNATLHNADEIARLGLRIGDKVVIRRAGDVIPQVVNVVLSERPEETRPVVFPAQCPVCGSDVERVEGEAVTRCTGGLICGAQRKEALKHFVSRRAMDVDGMGDKIIDQLVEKEYVHTPADLFRLTAGKLTGLDRMGPKSAQNLVNALEKAKETTFARFLYALGIREVGEATAAGLAAHFGTLEALINASIDDLQKVPDVGIVVATHVFNFFEEESNRAVIRDLTEEVGIHWPAPQVVKAEEIDSPFAGKTVVLTGTLSQMSRDDAKARLAALGAKVSGSVSKKTDLLIAGEAAGSKLAKAQELGIEVIDEAEMLRLLGE</sequence>
<reference key="1">
    <citation type="journal article" date="2010" name="PLoS ONE">
        <title>Genome sequence of Cronobacter sakazakii BAA-894 and comparative genomic hybridization analysis with other Cronobacter species.</title>
        <authorList>
            <person name="Kucerova E."/>
            <person name="Clifton S.W."/>
            <person name="Xia X.Q."/>
            <person name="Long F."/>
            <person name="Porwollik S."/>
            <person name="Fulton L."/>
            <person name="Fronick C."/>
            <person name="Minx P."/>
            <person name="Kyung K."/>
            <person name="Warren W."/>
            <person name="Fulton R."/>
            <person name="Feng D."/>
            <person name="Wollam A."/>
            <person name="Shah N."/>
            <person name="Bhonagiri V."/>
            <person name="Nash W.E."/>
            <person name="Hallsworth-Pepin K."/>
            <person name="Wilson R.K."/>
            <person name="McClelland M."/>
            <person name="Forsythe S.J."/>
        </authorList>
    </citation>
    <scope>NUCLEOTIDE SEQUENCE [LARGE SCALE GENOMIC DNA]</scope>
    <source>
        <strain>ATCC BAA-894</strain>
    </source>
</reference>
<proteinExistence type="inferred from homology"/>
<feature type="chain" id="PRO_0000313227" description="DNA ligase">
    <location>
        <begin position="1"/>
        <end position="672"/>
    </location>
</feature>
<feature type="domain" description="BRCT" evidence="1">
    <location>
        <begin position="594"/>
        <end position="672"/>
    </location>
</feature>
<feature type="active site" description="N6-AMP-lysine intermediate" evidence="1">
    <location>
        <position position="115"/>
    </location>
</feature>
<feature type="binding site" evidence="1">
    <location>
        <begin position="32"/>
        <end position="36"/>
    </location>
    <ligand>
        <name>NAD(+)</name>
        <dbReference type="ChEBI" id="CHEBI:57540"/>
    </ligand>
</feature>
<feature type="binding site" evidence="1">
    <location>
        <begin position="81"/>
        <end position="82"/>
    </location>
    <ligand>
        <name>NAD(+)</name>
        <dbReference type="ChEBI" id="CHEBI:57540"/>
    </ligand>
</feature>
<feature type="binding site" evidence="1">
    <location>
        <position position="113"/>
    </location>
    <ligand>
        <name>NAD(+)</name>
        <dbReference type="ChEBI" id="CHEBI:57540"/>
    </ligand>
</feature>
<feature type="binding site" evidence="1">
    <location>
        <position position="136"/>
    </location>
    <ligand>
        <name>NAD(+)</name>
        <dbReference type="ChEBI" id="CHEBI:57540"/>
    </ligand>
</feature>
<feature type="binding site" evidence="1">
    <location>
        <position position="173"/>
    </location>
    <ligand>
        <name>NAD(+)</name>
        <dbReference type="ChEBI" id="CHEBI:57540"/>
    </ligand>
</feature>
<feature type="binding site" evidence="1">
    <location>
        <position position="290"/>
    </location>
    <ligand>
        <name>NAD(+)</name>
        <dbReference type="ChEBI" id="CHEBI:57540"/>
    </ligand>
</feature>
<feature type="binding site" evidence="1">
    <location>
        <position position="314"/>
    </location>
    <ligand>
        <name>NAD(+)</name>
        <dbReference type="ChEBI" id="CHEBI:57540"/>
    </ligand>
</feature>
<feature type="binding site" evidence="1">
    <location>
        <position position="408"/>
    </location>
    <ligand>
        <name>Zn(2+)</name>
        <dbReference type="ChEBI" id="CHEBI:29105"/>
    </ligand>
</feature>
<feature type="binding site" evidence="1">
    <location>
        <position position="411"/>
    </location>
    <ligand>
        <name>Zn(2+)</name>
        <dbReference type="ChEBI" id="CHEBI:29105"/>
    </ligand>
</feature>
<feature type="binding site" evidence="1">
    <location>
        <position position="426"/>
    </location>
    <ligand>
        <name>Zn(2+)</name>
        <dbReference type="ChEBI" id="CHEBI:29105"/>
    </ligand>
</feature>
<feature type="binding site" evidence="1">
    <location>
        <position position="432"/>
    </location>
    <ligand>
        <name>Zn(2+)</name>
        <dbReference type="ChEBI" id="CHEBI:29105"/>
    </ligand>
</feature>
<dbReference type="EC" id="6.5.1.2" evidence="1"/>
<dbReference type="EMBL" id="CP000783">
    <property type="protein sequence ID" value="ABU76111.1"/>
    <property type="molecule type" value="Genomic_DNA"/>
</dbReference>
<dbReference type="RefSeq" id="WP_012124102.1">
    <property type="nucleotide sequence ID" value="NC_009778.1"/>
</dbReference>
<dbReference type="SMR" id="A7MKW4"/>
<dbReference type="KEGG" id="esa:ESA_00834"/>
<dbReference type="PATRIC" id="fig|290339.8.peg.743"/>
<dbReference type="HOGENOM" id="CLU_007764_2_1_6"/>
<dbReference type="Proteomes" id="UP000000260">
    <property type="component" value="Chromosome"/>
</dbReference>
<dbReference type="GO" id="GO:0005829">
    <property type="term" value="C:cytosol"/>
    <property type="evidence" value="ECO:0007669"/>
    <property type="project" value="TreeGrafter"/>
</dbReference>
<dbReference type="GO" id="GO:0003677">
    <property type="term" value="F:DNA binding"/>
    <property type="evidence" value="ECO:0007669"/>
    <property type="project" value="InterPro"/>
</dbReference>
<dbReference type="GO" id="GO:0003911">
    <property type="term" value="F:DNA ligase (NAD+) activity"/>
    <property type="evidence" value="ECO:0007669"/>
    <property type="project" value="UniProtKB-UniRule"/>
</dbReference>
<dbReference type="GO" id="GO:0046872">
    <property type="term" value="F:metal ion binding"/>
    <property type="evidence" value="ECO:0007669"/>
    <property type="project" value="UniProtKB-KW"/>
</dbReference>
<dbReference type="GO" id="GO:0006281">
    <property type="term" value="P:DNA repair"/>
    <property type="evidence" value="ECO:0007669"/>
    <property type="project" value="UniProtKB-KW"/>
</dbReference>
<dbReference type="GO" id="GO:0006260">
    <property type="term" value="P:DNA replication"/>
    <property type="evidence" value="ECO:0007669"/>
    <property type="project" value="UniProtKB-KW"/>
</dbReference>
<dbReference type="CDD" id="cd17748">
    <property type="entry name" value="BRCT_DNA_ligase_like"/>
    <property type="match status" value="1"/>
</dbReference>
<dbReference type="CDD" id="cd00114">
    <property type="entry name" value="LIGANc"/>
    <property type="match status" value="1"/>
</dbReference>
<dbReference type="FunFam" id="1.10.150.20:FF:000006">
    <property type="entry name" value="DNA ligase"/>
    <property type="match status" value="1"/>
</dbReference>
<dbReference type="FunFam" id="1.10.150.20:FF:000007">
    <property type="entry name" value="DNA ligase"/>
    <property type="match status" value="1"/>
</dbReference>
<dbReference type="FunFam" id="1.10.287.610:FF:000002">
    <property type="entry name" value="DNA ligase"/>
    <property type="match status" value="1"/>
</dbReference>
<dbReference type="FunFam" id="2.40.50.140:FF:000012">
    <property type="entry name" value="DNA ligase"/>
    <property type="match status" value="1"/>
</dbReference>
<dbReference type="FunFam" id="3.30.470.30:FF:000001">
    <property type="entry name" value="DNA ligase"/>
    <property type="match status" value="1"/>
</dbReference>
<dbReference type="FunFam" id="3.40.50.10190:FF:000004">
    <property type="entry name" value="DNA ligase"/>
    <property type="match status" value="1"/>
</dbReference>
<dbReference type="FunFam" id="6.20.10.30:FF:000001">
    <property type="entry name" value="DNA ligase"/>
    <property type="match status" value="1"/>
</dbReference>
<dbReference type="Gene3D" id="6.20.10.30">
    <property type="match status" value="1"/>
</dbReference>
<dbReference type="Gene3D" id="1.10.150.20">
    <property type="entry name" value="5' to 3' exonuclease, C-terminal subdomain"/>
    <property type="match status" value="2"/>
</dbReference>
<dbReference type="Gene3D" id="3.40.50.10190">
    <property type="entry name" value="BRCT domain"/>
    <property type="match status" value="1"/>
</dbReference>
<dbReference type="Gene3D" id="3.30.470.30">
    <property type="entry name" value="DNA ligase/mRNA capping enzyme"/>
    <property type="match status" value="1"/>
</dbReference>
<dbReference type="Gene3D" id="1.10.287.610">
    <property type="entry name" value="Helix hairpin bin"/>
    <property type="match status" value="1"/>
</dbReference>
<dbReference type="Gene3D" id="2.40.50.140">
    <property type="entry name" value="Nucleic acid-binding proteins"/>
    <property type="match status" value="1"/>
</dbReference>
<dbReference type="HAMAP" id="MF_01588">
    <property type="entry name" value="DNA_ligase_A"/>
    <property type="match status" value="1"/>
</dbReference>
<dbReference type="InterPro" id="IPR001357">
    <property type="entry name" value="BRCT_dom"/>
</dbReference>
<dbReference type="InterPro" id="IPR036420">
    <property type="entry name" value="BRCT_dom_sf"/>
</dbReference>
<dbReference type="InterPro" id="IPR041663">
    <property type="entry name" value="DisA/LigA_HHH"/>
</dbReference>
<dbReference type="InterPro" id="IPR001679">
    <property type="entry name" value="DNA_ligase"/>
</dbReference>
<dbReference type="InterPro" id="IPR018239">
    <property type="entry name" value="DNA_ligase_AS"/>
</dbReference>
<dbReference type="InterPro" id="IPR033136">
    <property type="entry name" value="DNA_ligase_CS"/>
</dbReference>
<dbReference type="InterPro" id="IPR013839">
    <property type="entry name" value="DNAligase_adenylation"/>
</dbReference>
<dbReference type="InterPro" id="IPR013840">
    <property type="entry name" value="DNAligase_N"/>
</dbReference>
<dbReference type="InterPro" id="IPR003583">
    <property type="entry name" value="Hlx-hairpin-Hlx_DNA-bd_motif"/>
</dbReference>
<dbReference type="InterPro" id="IPR012340">
    <property type="entry name" value="NA-bd_OB-fold"/>
</dbReference>
<dbReference type="InterPro" id="IPR004150">
    <property type="entry name" value="NAD_DNA_ligase_OB"/>
</dbReference>
<dbReference type="InterPro" id="IPR010994">
    <property type="entry name" value="RuvA_2-like"/>
</dbReference>
<dbReference type="InterPro" id="IPR004149">
    <property type="entry name" value="Znf_DNAligase_C4"/>
</dbReference>
<dbReference type="NCBIfam" id="TIGR00575">
    <property type="entry name" value="dnlj"/>
    <property type="match status" value="1"/>
</dbReference>
<dbReference type="NCBIfam" id="NF005932">
    <property type="entry name" value="PRK07956.1"/>
    <property type="match status" value="1"/>
</dbReference>
<dbReference type="PANTHER" id="PTHR23389">
    <property type="entry name" value="CHROMOSOME TRANSMISSION FIDELITY FACTOR 18"/>
    <property type="match status" value="1"/>
</dbReference>
<dbReference type="PANTHER" id="PTHR23389:SF9">
    <property type="entry name" value="DNA LIGASE"/>
    <property type="match status" value="1"/>
</dbReference>
<dbReference type="Pfam" id="PF00533">
    <property type="entry name" value="BRCT"/>
    <property type="match status" value="1"/>
</dbReference>
<dbReference type="Pfam" id="PF01653">
    <property type="entry name" value="DNA_ligase_aden"/>
    <property type="match status" value="1"/>
</dbReference>
<dbReference type="Pfam" id="PF03120">
    <property type="entry name" value="DNA_ligase_OB"/>
    <property type="match status" value="1"/>
</dbReference>
<dbReference type="Pfam" id="PF03119">
    <property type="entry name" value="DNA_ligase_ZBD"/>
    <property type="match status" value="1"/>
</dbReference>
<dbReference type="Pfam" id="PF12826">
    <property type="entry name" value="HHH_2"/>
    <property type="match status" value="1"/>
</dbReference>
<dbReference type="Pfam" id="PF14520">
    <property type="entry name" value="HHH_5"/>
    <property type="match status" value="1"/>
</dbReference>
<dbReference type="Pfam" id="PF22745">
    <property type="entry name" value="Nlig-Ia"/>
    <property type="match status" value="1"/>
</dbReference>
<dbReference type="PIRSF" id="PIRSF001604">
    <property type="entry name" value="LigA"/>
    <property type="match status" value="1"/>
</dbReference>
<dbReference type="SMART" id="SM00292">
    <property type="entry name" value="BRCT"/>
    <property type="match status" value="1"/>
</dbReference>
<dbReference type="SMART" id="SM00278">
    <property type="entry name" value="HhH1"/>
    <property type="match status" value="4"/>
</dbReference>
<dbReference type="SMART" id="SM00532">
    <property type="entry name" value="LIGANc"/>
    <property type="match status" value="1"/>
</dbReference>
<dbReference type="SUPFAM" id="SSF52113">
    <property type="entry name" value="BRCT domain"/>
    <property type="match status" value="1"/>
</dbReference>
<dbReference type="SUPFAM" id="SSF56091">
    <property type="entry name" value="DNA ligase/mRNA capping enzyme, catalytic domain"/>
    <property type="match status" value="1"/>
</dbReference>
<dbReference type="SUPFAM" id="SSF50249">
    <property type="entry name" value="Nucleic acid-binding proteins"/>
    <property type="match status" value="1"/>
</dbReference>
<dbReference type="SUPFAM" id="SSF47781">
    <property type="entry name" value="RuvA domain 2-like"/>
    <property type="match status" value="1"/>
</dbReference>
<dbReference type="PROSITE" id="PS50172">
    <property type="entry name" value="BRCT"/>
    <property type="match status" value="1"/>
</dbReference>
<dbReference type="PROSITE" id="PS01055">
    <property type="entry name" value="DNA_LIGASE_N1"/>
    <property type="match status" value="1"/>
</dbReference>
<dbReference type="PROSITE" id="PS01056">
    <property type="entry name" value="DNA_LIGASE_N2"/>
    <property type="match status" value="1"/>
</dbReference>
<evidence type="ECO:0000255" key="1">
    <source>
        <dbReference type="HAMAP-Rule" id="MF_01588"/>
    </source>
</evidence>
<accession>A7MKW4</accession>
<comment type="function">
    <text evidence="1">DNA ligase that catalyzes the formation of phosphodiester linkages between 5'-phosphoryl and 3'-hydroxyl groups in double-stranded DNA using NAD as a coenzyme and as the energy source for the reaction. It is essential for DNA replication and repair of damaged DNA.</text>
</comment>
<comment type="catalytic activity">
    <reaction evidence="1">
        <text>NAD(+) + (deoxyribonucleotide)n-3'-hydroxyl + 5'-phospho-(deoxyribonucleotide)m = (deoxyribonucleotide)n+m + AMP + beta-nicotinamide D-nucleotide.</text>
        <dbReference type="EC" id="6.5.1.2"/>
    </reaction>
</comment>
<comment type="cofactor">
    <cofactor evidence="1">
        <name>Mg(2+)</name>
        <dbReference type="ChEBI" id="CHEBI:18420"/>
    </cofactor>
    <cofactor evidence="1">
        <name>Mn(2+)</name>
        <dbReference type="ChEBI" id="CHEBI:29035"/>
    </cofactor>
</comment>
<comment type="similarity">
    <text evidence="1">Belongs to the NAD-dependent DNA ligase family. LigA subfamily.</text>
</comment>
<protein>
    <recommendedName>
        <fullName evidence="1">DNA ligase</fullName>
        <ecNumber evidence="1">6.5.1.2</ecNumber>
    </recommendedName>
    <alternativeName>
        <fullName evidence="1">Polydeoxyribonucleotide synthase [NAD(+)]</fullName>
    </alternativeName>
</protein>
<name>DNLJ_CROS8</name>
<keyword id="KW-0227">DNA damage</keyword>
<keyword id="KW-0234">DNA repair</keyword>
<keyword id="KW-0235">DNA replication</keyword>
<keyword id="KW-0436">Ligase</keyword>
<keyword id="KW-0460">Magnesium</keyword>
<keyword id="KW-0464">Manganese</keyword>
<keyword id="KW-0479">Metal-binding</keyword>
<keyword id="KW-0520">NAD</keyword>
<keyword id="KW-1185">Reference proteome</keyword>
<keyword id="KW-0862">Zinc</keyword>
<organism>
    <name type="scientific">Cronobacter sakazakii (strain ATCC BAA-894)</name>
    <name type="common">Enterobacter sakazakii</name>
    <dbReference type="NCBI Taxonomy" id="290339"/>
    <lineage>
        <taxon>Bacteria</taxon>
        <taxon>Pseudomonadati</taxon>
        <taxon>Pseudomonadota</taxon>
        <taxon>Gammaproteobacteria</taxon>
        <taxon>Enterobacterales</taxon>
        <taxon>Enterobacteriaceae</taxon>
        <taxon>Cronobacter</taxon>
    </lineage>
</organism>